<sequence>MKISIIGGGAWGSTLAQLLTDNNHQILINEINLEYVNKINNGIHPIFNQILKDVKATVSLSETLEFSDFIVLCLPTRVMRLTLRKINKIISQPKYFINVSKGMEIENYKIIYQIVQEEITIQNIKNYACVMGPSHAEDVILRKLTLLVAASLDFSFACKVQKIFYNYNYLRVYSSNDLYGVEICSAFKNVLALISGVLDSFDFGYNFQAGFISRGLLEMAKVVDFFKGDKQTVFGLTGLGDLIVTAFNENSRNYQAGKKIGLGMEIKDIIKNSSQSIEGINNLKAFYNLSLEKKIDLPIVKEAYQMIFNYKSIKIILNNLLKRPLKLEKIF</sequence>
<name>GPDA_PHYMT</name>
<feature type="chain" id="PRO_1000190167" description="Glycerol-3-phosphate dehydrogenase [NAD(P)+]">
    <location>
        <begin position="1"/>
        <end position="331"/>
    </location>
</feature>
<feature type="active site" description="Proton acceptor" evidence="1">
    <location>
        <position position="188"/>
    </location>
</feature>
<feature type="binding site" evidence="1">
    <location>
        <position position="11"/>
    </location>
    <ligand>
        <name>NADPH</name>
        <dbReference type="ChEBI" id="CHEBI:57783"/>
    </ligand>
</feature>
<feature type="binding site" evidence="1">
    <location>
        <position position="101"/>
    </location>
    <ligand>
        <name>NADPH</name>
        <dbReference type="ChEBI" id="CHEBI:57783"/>
    </ligand>
</feature>
<feature type="binding site" evidence="1">
    <location>
        <position position="101"/>
    </location>
    <ligand>
        <name>sn-glycerol 3-phosphate</name>
        <dbReference type="ChEBI" id="CHEBI:57597"/>
    </ligand>
</feature>
<feature type="binding site" evidence="1">
    <location>
        <position position="132"/>
    </location>
    <ligand>
        <name>sn-glycerol 3-phosphate</name>
        <dbReference type="ChEBI" id="CHEBI:57597"/>
    </ligand>
</feature>
<feature type="binding site" evidence="1">
    <location>
        <position position="134"/>
    </location>
    <ligand>
        <name>sn-glycerol 3-phosphate</name>
        <dbReference type="ChEBI" id="CHEBI:57597"/>
    </ligand>
</feature>
<feature type="binding site" evidence="1">
    <location>
        <position position="136"/>
    </location>
    <ligand>
        <name>NADPH</name>
        <dbReference type="ChEBI" id="CHEBI:57783"/>
    </ligand>
</feature>
<feature type="binding site" evidence="1">
    <location>
        <position position="188"/>
    </location>
    <ligand>
        <name>sn-glycerol 3-phosphate</name>
        <dbReference type="ChEBI" id="CHEBI:57597"/>
    </ligand>
</feature>
<feature type="binding site" evidence="1">
    <location>
        <position position="241"/>
    </location>
    <ligand>
        <name>sn-glycerol 3-phosphate</name>
        <dbReference type="ChEBI" id="CHEBI:57597"/>
    </ligand>
</feature>
<feature type="binding site" evidence="1">
    <location>
        <position position="251"/>
    </location>
    <ligand>
        <name>sn-glycerol 3-phosphate</name>
        <dbReference type="ChEBI" id="CHEBI:57597"/>
    </ligand>
</feature>
<feature type="binding site" evidence="1">
    <location>
        <position position="252"/>
    </location>
    <ligand>
        <name>NADPH</name>
        <dbReference type="ChEBI" id="CHEBI:57783"/>
    </ligand>
</feature>
<feature type="binding site" evidence="1">
    <location>
        <position position="252"/>
    </location>
    <ligand>
        <name>sn-glycerol 3-phosphate</name>
        <dbReference type="ChEBI" id="CHEBI:57597"/>
    </ligand>
</feature>
<feature type="binding site" evidence="1">
    <location>
        <position position="253"/>
    </location>
    <ligand>
        <name>sn-glycerol 3-phosphate</name>
        <dbReference type="ChEBI" id="CHEBI:57597"/>
    </ligand>
</feature>
<feature type="binding site" evidence="1">
    <location>
        <position position="278"/>
    </location>
    <ligand>
        <name>NADPH</name>
        <dbReference type="ChEBI" id="CHEBI:57783"/>
    </ligand>
</feature>
<gene>
    <name evidence="1" type="primary">gpsA</name>
    <name type="ordered locus">ATP_00120</name>
</gene>
<comment type="function">
    <text evidence="1">Catalyzes the reduction of the glycolytic intermediate dihydroxyacetone phosphate (DHAP) to sn-glycerol 3-phosphate (G3P), the key precursor for phospholipid synthesis.</text>
</comment>
<comment type="catalytic activity">
    <reaction evidence="1">
        <text>sn-glycerol 3-phosphate + NAD(+) = dihydroxyacetone phosphate + NADH + H(+)</text>
        <dbReference type="Rhea" id="RHEA:11092"/>
        <dbReference type="ChEBI" id="CHEBI:15378"/>
        <dbReference type="ChEBI" id="CHEBI:57540"/>
        <dbReference type="ChEBI" id="CHEBI:57597"/>
        <dbReference type="ChEBI" id="CHEBI:57642"/>
        <dbReference type="ChEBI" id="CHEBI:57945"/>
        <dbReference type="EC" id="1.1.1.94"/>
    </reaction>
    <physiologicalReaction direction="right-to-left" evidence="1">
        <dbReference type="Rhea" id="RHEA:11094"/>
    </physiologicalReaction>
</comment>
<comment type="catalytic activity">
    <reaction evidence="1">
        <text>sn-glycerol 3-phosphate + NADP(+) = dihydroxyacetone phosphate + NADPH + H(+)</text>
        <dbReference type="Rhea" id="RHEA:11096"/>
        <dbReference type="ChEBI" id="CHEBI:15378"/>
        <dbReference type="ChEBI" id="CHEBI:57597"/>
        <dbReference type="ChEBI" id="CHEBI:57642"/>
        <dbReference type="ChEBI" id="CHEBI:57783"/>
        <dbReference type="ChEBI" id="CHEBI:58349"/>
        <dbReference type="EC" id="1.1.1.94"/>
    </reaction>
    <physiologicalReaction direction="right-to-left" evidence="1">
        <dbReference type="Rhea" id="RHEA:11098"/>
    </physiologicalReaction>
</comment>
<comment type="pathway">
    <text evidence="1">Membrane lipid metabolism; glycerophospholipid metabolism.</text>
</comment>
<comment type="subcellular location">
    <subcellularLocation>
        <location evidence="1">Cytoplasm</location>
    </subcellularLocation>
</comment>
<comment type="similarity">
    <text evidence="1">Belongs to the NAD-dependent glycerol-3-phosphate dehydrogenase family.</text>
</comment>
<dbReference type="EC" id="1.1.1.94" evidence="1"/>
<dbReference type="EMBL" id="CU469464">
    <property type="protein sequence ID" value="CAP18307.1"/>
    <property type="molecule type" value="Genomic_DNA"/>
</dbReference>
<dbReference type="SMR" id="B3R0E3"/>
<dbReference type="STRING" id="37692.ATP_00120"/>
<dbReference type="KEGG" id="pml:ATP_00120"/>
<dbReference type="eggNOG" id="COG0240">
    <property type="taxonomic scope" value="Bacteria"/>
</dbReference>
<dbReference type="HOGENOM" id="CLU_033449_0_0_14"/>
<dbReference type="UniPathway" id="UPA00940"/>
<dbReference type="Proteomes" id="UP000002020">
    <property type="component" value="Chromosome"/>
</dbReference>
<dbReference type="GO" id="GO:0005829">
    <property type="term" value="C:cytosol"/>
    <property type="evidence" value="ECO:0007669"/>
    <property type="project" value="TreeGrafter"/>
</dbReference>
<dbReference type="GO" id="GO:0047952">
    <property type="term" value="F:glycerol-3-phosphate dehydrogenase [NAD(P)+] activity"/>
    <property type="evidence" value="ECO:0007669"/>
    <property type="project" value="UniProtKB-UniRule"/>
</dbReference>
<dbReference type="GO" id="GO:0051287">
    <property type="term" value="F:NAD binding"/>
    <property type="evidence" value="ECO:0007669"/>
    <property type="project" value="InterPro"/>
</dbReference>
<dbReference type="GO" id="GO:0005975">
    <property type="term" value="P:carbohydrate metabolic process"/>
    <property type="evidence" value="ECO:0007669"/>
    <property type="project" value="InterPro"/>
</dbReference>
<dbReference type="GO" id="GO:0046167">
    <property type="term" value="P:glycerol-3-phosphate biosynthetic process"/>
    <property type="evidence" value="ECO:0007669"/>
    <property type="project" value="UniProtKB-UniRule"/>
</dbReference>
<dbReference type="GO" id="GO:0046168">
    <property type="term" value="P:glycerol-3-phosphate catabolic process"/>
    <property type="evidence" value="ECO:0007669"/>
    <property type="project" value="InterPro"/>
</dbReference>
<dbReference type="GO" id="GO:0006650">
    <property type="term" value="P:glycerophospholipid metabolic process"/>
    <property type="evidence" value="ECO:0007669"/>
    <property type="project" value="UniProtKB-UniRule"/>
</dbReference>
<dbReference type="GO" id="GO:0008654">
    <property type="term" value="P:phospholipid biosynthetic process"/>
    <property type="evidence" value="ECO:0007669"/>
    <property type="project" value="UniProtKB-KW"/>
</dbReference>
<dbReference type="Gene3D" id="1.10.1040.10">
    <property type="entry name" value="N-(1-d-carboxylethyl)-l-norvaline Dehydrogenase, domain 2"/>
    <property type="match status" value="1"/>
</dbReference>
<dbReference type="Gene3D" id="3.40.50.720">
    <property type="entry name" value="NAD(P)-binding Rossmann-like Domain"/>
    <property type="match status" value="1"/>
</dbReference>
<dbReference type="HAMAP" id="MF_00394">
    <property type="entry name" value="NAD_Glyc3P_dehydrog"/>
    <property type="match status" value="1"/>
</dbReference>
<dbReference type="InterPro" id="IPR008927">
    <property type="entry name" value="6-PGluconate_DH-like_C_sf"/>
</dbReference>
<dbReference type="InterPro" id="IPR013328">
    <property type="entry name" value="6PGD_dom2"/>
</dbReference>
<dbReference type="InterPro" id="IPR006168">
    <property type="entry name" value="G3P_DH_NAD-dep"/>
</dbReference>
<dbReference type="InterPro" id="IPR006109">
    <property type="entry name" value="G3P_DH_NAD-dep_C"/>
</dbReference>
<dbReference type="InterPro" id="IPR011128">
    <property type="entry name" value="G3P_DH_NAD-dep_N"/>
</dbReference>
<dbReference type="InterPro" id="IPR036291">
    <property type="entry name" value="NAD(P)-bd_dom_sf"/>
</dbReference>
<dbReference type="NCBIfam" id="NF000940">
    <property type="entry name" value="PRK00094.1-2"/>
    <property type="match status" value="1"/>
</dbReference>
<dbReference type="NCBIfam" id="NF000942">
    <property type="entry name" value="PRK00094.1-4"/>
    <property type="match status" value="1"/>
</dbReference>
<dbReference type="PANTHER" id="PTHR11728">
    <property type="entry name" value="GLYCEROL-3-PHOSPHATE DEHYDROGENASE"/>
    <property type="match status" value="1"/>
</dbReference>
<dbReference type="PANTHER" id="PTHR11728:SF1">
    <property type="entry name" value="GLYCEROL-3-PHOSPHATE DEHYDROGENASE [NAD(+)] 2, CHLOROPLASTIC"/>
    <property type="match status" value="1"/>
</dbReference>
<dbReference type="Pfam" id="PF07479">
    <property type="entry name" value="NAD_Gly3P_dh_C"/>
    <property type="match status" value="1"/>
</dbReference>
<dbReference type="Pfam" id="PF01210">
    <property type="entry name" value="NAD_Gly3P_dh_N"/>
    <property type="match status" value="1"/>
</dbReference>
<dbReference type="PIRSF" id="PIRSF000114">
    <property type="entry name" value="Glycerol-3-P_dh"/>
    <property type="match status" value="1"/>
</dbReference>
<dbReference type="PRINTS" id="PR00077">
    <property type="entry name" value="GPDHDRGNASE"/>
</dbReference>
<dbReference type="SUPFAM" id="SSF48179">
    <property type="entry name" value="6-phosphogluconate dehydrogenase C-terminal domain-like"/>
    <property type="match status" value="1"/>
</dbReference>
<dbReference type="SUPFAM" id="SSF51735">
    <property type="entry name" value="NAD(P)-binding Rossmann-fold domains"/>
    <property type="match status" value="1"/>
</dbReference>
<dbReference type="PROSITE" id="PS00957">
    <property type="entry name" value="NAD_G3PDH"/>
    <property type="match status" value="1"/>
</dbReference>
<keyword id="KW-0963">Cytoplasm</keyword>
<keyword id="KW-0444">Lipid biosynthesis</keyword>
<keyword id="KW-0443">Lipid metabolism</keyword>
<keyword id="KW-0520">NAD</keyword>
<keyword id="KW-0521">NADP</keyword>
<keyword id="KW-0547">Nucleotide-binding</keyword>
<keyword id="KW-0560">Oxidoreductase</keyword>
<keyword id="KW-0594">Phospholipid biosynthesis</keyword>
<keyword id="KW-1208">Phospholipid metabolism</keyword>
<keyword id="KW-1185">Reference proteome</keyword>
<protein>
    <recommendedName>
        <fullName evidence="1">Glycerol-3-phosphate dehydrogenase [NAD(P)+]</fullName>
        <ecNumber evidence="1">1.1.1.94</ecNumber>
    </recommendedName>
    <alternativeName>
        <fullName evidence="1">NAD(P)(+)-dependent glycerol-3-phosphate dehydrogenase</fullName>
    </alternativeName>
    <alternativeName>
        <fullName evidence="1">NAD(P)H-dependent dihydroxyacetone-phosphate reductase</fullName>
    </alternativeName>
</protein>
<evidence type="ECO:0000255" key="1">
    <source>
        <dbReference type="HAMAP-Rule" id="MF_00394"/>
    </source>
</evidence>
<organism>
    <name type="scientific">Phytoplasma mali (strain AT)</name>
    <dbReference type="NCBI Taxonomy" id="482235"/>
    <lineage>
        <taxon>Bacteria</taxon>
        <taxon>Bacillati</taxon>
        <taxon>Mycoplasmatota</taxon>
        <taxon>Mollicutes</taxon>
        <taxon>Acholeplasmatales</taxon>
        <taxon>Acholeplasmataceae</taxon>
        <taxon>Candidatus Phytoplasma</taxon>
        <taxon>16SrX (Apple proliferation group)</taxon>
    </lineage>
</organism>
<accession>B3R0E3</accession>
<reference key="1">
    <citation type="journal article" date="2008" name="BMC Genomics">
        <title>The linear chromosome of the plant-pathogenic mycoplasma 'Candidatus Phytoplasma mali'.</title>
        <authorList>
            <person name="Kube M."/>
            <person name="Schneider B."/>
            <person name="Kuhl H."/>
            <person name="Dandekar T."/>
            <person name="Heitmann K."/>
            <person name="Migdoll A.M."/>
            <person name="Reinhardt R."/>
            <person name="Seemueller E."/>
        </authorList>
    </citation>
    <scope>NUCLEOTIDE SEQUENCE [LARGE SCALE GENOMIC DNA]</scope>
    <source>
        <strain>AT</strain>
    </source>
</reference>
<proteinExistence type="inferred from homology"/>